<reference key="1">
    <citation type="submission" date="2009-01" db="EMBL/GenBank/DDBJ databases">
        <title>Complete sequence of chromosome of Arthrobacter chlorophenolicus A6.</title>
        <authorList>
            <consortium name="US DOE Joint Genome Institute"/>
            <person name="Lucas S."/>
            <person name="Copeland A."/>
            <person name="Lapidus A."/>
            <person name="Glavina del Rio T."/>
            <person name="Tice H."/>
            <person name="Bruce D."/>
            <person name="Goodwin L."/>
            <person name="Pitluck S."/>
            <person name="Goltsman E."/>
            <person name="Clum A."/>
            <person name="Larimer F."/>
            <person name="Land M."/>
            <person name="Hauser L."/>
            <person name="Kyrpides N."/>
            <person name="Mikhailova N."/>
            <person name="Jansson J."/>
            <person name="Richardson P."/>
        </authorList>
    </citation>
    <scope>NUCLEOTIDE SEQUENCE [LARGE SCALE GENOMIC DNA]</scope>
    <source>
        <strain>ATCC 700700 / DSM 12829 / CIP 107037 / JCM 12360 / KCTC 9906 / NCIMB 13794 / A6</strain>
    </source>
</reference>
<evidence type="ECO:0000255" key="1">
    <source>
        <dbReference type="HAMAP-Rule" id="MF_00044"/>
    </source>
</evidence>
<sequence>MLRTHDLGSLRSEHIGQTVTLAGWVGRRRDHGGVAFVDLRDASGVAQIVVREEEVFHGLRNEYVLQVTGTVSKRPEGNENPALGTGEIEVIAEDVTVLNTSDPLPFQIDEHVEVGEEARLKHRYLDLRRPGPSRNIRLRSEANRVARDLLHHEGYVEIETPTLTRSTPEGARDFLVPARLAPGSWYALPQSPQLFKQLLQVGGFEKYYQIARCYRDEDFRADRQPEFTQLDIEASFVDQDDVIRLGENIVKAVWKLIDVEIPTPIQRITYADAMARYGSDKPDLRFGQELTELTEFFKDTNFGVFKAPYVGAVVMPGGASQARRALDAWQEWAKQRGAKGLAYVLYKEDGELAGPVAKNLTDTERAGLADAVGAKPGDCIFFAAGEKTPSRALLGAARVEIGHRTGLIDPTDWAFCWVVDAPMFEPAAAAVASGDVAVGAGQWTAVHHAFTSPKPEFLDTFDKDPESALSYAYDIVCNGNEIGGGSIRIHQRDVQERVFELMGLDKEDAQTKFGFLLEGFKYGAPPHGGIAFGWDRVVSLLAGVESIRDVIAFPKSGGGFDPLTAAPAPITAQQRKEAGVDFKPEAVKPVEARKAEAVK</sequence>
<gene>
    <name evidence="1" type="primary">aspS</name>
    <name type="ordered locus">Achl_2022</name>
</gene>
<accession>B8H9C7</accession>
<proteinExistence type="inferred from homology"/>
<dbReference type="EC" id="6.1.1.23" evidence="1"/>
<dbReference type="EMBL" id="CP001341">
    <property type="protein sequence ID" value="ACL39996.1"/>
    <property type="molecule type" value="Genomic_DNA"/>
</dbReference>
<dbReference type="RefSeq" id="WP_015937214.1">
    <property type="nucleotide sequence ID" value="NC_011886.1"/>
</dbReference>
<dbReference type="SMR" id="B8H9C7"/>
<dbReference type="STRING" id="452863.Achl_2022"/>
<dbReference type="KEGG" id="ach:Achl_2022"/>
<dbReference type="eggNOG" id="COG0173">
    <property type="taxonomic scope" value="Bacteria"/>
</dbReference>
<dbReference type="HOGENOM" id="CLU_014330_3_2_11"/>
<dbReference type="OrthoDB" id="9802326at2"/>
<dbReference type="Proteomes" id="UP000002505">
    <property type="component" value="Chromosome"/>
</dbReference>
<dbReference type="GO" id="GO:0005737">
    <property type="term" value="C:cytoplasm"/>
    <property type="evidence" value="ECO:0007669"/>
    <property type="project" value="UniProtKB-SubCell"/>
</dbReference>
<dbReference type="GO" id="GO:0004815">
    <property type="term" value="F:aspartate-tRNA ligase activity"/>
    <property type="evidence" value="ECO:0007669"/>
    <property type="project" value="UniProtKB-UniRule"/>
</dbReference>
<dbReference type="GO" id="GO:0050560">
    <property type="term" value="F:aspartate-tRNA(Asn) ligase activity"/>
    <property type="evidence" value="ECO:0007669"/>
    <property type="project" value="UniProtKB-EC"/>
</dbReference>
<dbReference type="GO" id="GO:0005524">
    <property type="term" value="F:ATP binding"/>
    <property type="evidence" value="ECO:0007669"/>
    <property type="project" value="UniProtKB-UniRule"/>
</dbReference>
<dbReference type="GO" id="GO:0003676">
    <property type="term" value="F:nucleic acid binding"/>
    <property type="evidence" value="ECO:0007669"/>
    <property type="project" value="InterPro"/>
</dbReference>
<dbReference type="GO" id="GO:0006422">
    <property type="term" value="P:aspartyl-tRNA aminoacylation"/>
    <property type="evidence" value="ECO:0007669"/>
    <property type="project" value="UniProtKB-UniRule"/>
</dbReference>
<dbReference type="CDD" id="cd00777">
    <property type="entry name" value="AspRS_core"/>
    <property type="match status" value="1"/>
</dbReference>
<dbReference type="CDD" id="cd04317">
    <property type="entry name" value="EcAspRS_like_N"/>
    <property type="match status" value="1"/>
</dbReference>
<dbReference type="Gene3D" id="3.30.930.10">
    <property type="entry name" value="Bira Bifunctional Protein, Domain 2"/>
    <property type="match status" value="1"/>
</dbReference>
<dbReference type="Gene3D" id="3.30.1360.30">
    <property type="entry name" value="GAD-like domain"/>
    <property type="match status" value="1"/>
</dbReference>
<dbReference type="Gene3D" id="2.40.50.140">
    <property type="entry name" value="Nucleic acid-binding proteins"/>
    <property type="match status" value="1"/>
</dbReference>
<dbReference type="HAMAP" id="MF_00044">
    <property type="entry name" value="Asp_tRNA_synth_type1"/>
    <property type="match status" value="1"/>
</dbReference>
<dbReference type="InterPro" id="IPR004364">
    <property type="entry name" value="Aa-tRNA-synt_II"/>
</dbReference>
<dbReference type="InterPro" id="IPR006195">
    <property type="entry name" value="aa-tRNA-synth_II"/>
</dbReference>
<dbReference type="InterPro" id="IPR045864">
    <property type="entry name" value="aa-tRNA-synth_II/BPL/LPL"/>
</dbReference>
<dbReference type="InterPro" id="IPR004524">
    <property type="entry name" value="Asp-tRNA-ligase_1"/>
</dbReference>
<dbReference type="InterPro" id="IPR047089">
    <property type="entry name" value="Asp-tRNA-ligase_1_N"/>
</dbReference>
<dbReference type="InterPro" id="IPR002312">
    <property type="entry name" value="Asp/Asn-tRNA-synth_IIb"/>
</dbReference>
<dbReference type="InterPro" id="IPR047090">
    <property type="entry name" value="AspRS_core"/>
</dbReference>
<dbReference type="InterPro" id="IPR004115">
    <property type="entry name" value="GAD-like_sf"/>
</dbReference>
<dbReference type="InterPro" id="IPR029351">
    <property type="entry name" value="GAD_dom"/>
</dbReference>
<dbReference type="InterPro" id="IPR012340">
    <property type="entry name" value="NA-bd_OB-fold"/>
</dbReference>
<dbReference type="InterPro" id="IPR004365">
    <property type="entry name" value="NA-bd_OB_tRNA"/>
</dbReference>
<dbReference type="NCBIfam" id="TIGR00459">
    <property type="entry name" value="aspS_bact"/>
    <property type="match status" value="1"/>
</dbReference>
<dbReference type="NCBIfam" id="NF001750">
    <property type="entry name" value="PRK00476.1"/>
    <property type="match status" value="1"/>
</dbReference>
<dbReference type="PANTHER" id="PTHR22594:SF5">
    <property type="entry name" value="ASPARTATE--TRNA LIGASE, MITOCHONDRIAL"/>
    <property type="match status" value="1"/>
</dbReference>
<dbReference type="PANTHER" id="PTHR22594">
    <property type="entry name" value="ASPARTYL/LYSYL-TRNA SYNTHETASE"/>
    <property type="match status" value="1"/>
</dbReference>
<dbReference type="Pfam" id="PF02938">
    <property type="entry name" value="GAD"/>
    <property type="match status" value="1"/>
</dbReference>
<dbReference type="Pfam" id="PF00152">
    <property type="entry name" value="tRNA-synt_2"/>
    <property type="match status" value="1"/>
</dbReference>
<dbReference type="Pfam" id="PF01336">
    <property type="entry name" value="tRNA_anti-codon"/>
    <property type="match status" value="1"/>
</dbReference>
<dbReference type="PRINTS" id="PR01042">
    <property type="entry name" value="TRNASYNTHASP"/>
</dbReference>
<dbReference type="SUPFAM" id="SSF55681">
    <property type="entry name" value="Class II aaRS and biotin synthetases"/>
    <property type="match status" value="1"/>
</dbReference>
<dbReference type="SUPFAM" id="SSF55261">
    <property type="entry name" value="GAD domain-like"/>
    <property type="match status" value="1"/>
</dbReference>
<dbReference type="SUPFAM" id="SSF50249">
    <property type="entry name" value="Nucleic acid-binding proteins"/>
    <property type="match status" value="1"/>
</dbReference>
<dbReference type="PROSITE" id="PS50862">
    <property type="entry name" value="AA_TRNA_LIGASE_II"/>
    <property type="match status" value="1"/>
</dbReference>
<comment type="function">
    <text evidence="1">Aspartyl-tRNA synthetase with relaxed tRNA specificity since it is able to aspartylate not only its cognate tRNA(Asp) but also tRNA(Asn). Reaction proceeds in two steps: L-aspartate is first activated by ATP to form Asp-AMP and then transferred to the acceptor end of tRNA(Asp/Asn).</text>
</comment>
<comment type="catalytic activity">
    <reaction evidence="1">
        <text>tRNA(Asx) + L-aspartate + ATP = L-aspartyl-tRNA(Asx) + AMP + diphosphate</text>
        <dbReference type="Rhea" id="RHEA:18349"/>
        <dbReference type="Rhea" id="RHEA-COMP:9710"/>
        <dbReference type="Rhea" id="RHEA-COMP:9711"/>
        <dbReference type="ChEBI" id="CHEBI:29991"/>
        <dbReference type="ChEBI" id="CHEBI:30616"/>
        <dbReference type="ChEBI" id="CHEBI:33019"/>
        <dbReference type="ChEBI" id="CHEBI:78442"/>
        <dbReference type="ChEBI" id="CHEBI:78516"/>
        <dbReference type="ChEBI" id="CHEBI:456215"/>
        <dbReference type="EC" id="6.1.1.23"/>
    </reaction>
</comment>
<comment type="subunit">
    <text evidence="1">Homodimer.</text>
</comment>
<comment type="subcellular location">
    <subcellularLocation>
        <location evidence="1">Cytoplasm</location>
    </subcellularLocation>
</comment>
<comment type="similarity">
    <text evidence="1">Belongs to the class-II aminoacyl-tRNA synthetase family. Type 1 subfamily.</text>
</comment>
<feature type="chain" id="PRO_1000198953" description="Aspartate--tRNA(Asp/Asn) ligase">
    <location>
        <begin position="1"/>
        <end position="599"/>
    </location>
</feature>
<feature type="region of interest" description="Aspartate" evidence="1">
    <location>
        <begin position="193"/>
        <end position="196"/>
    </location>
</feature>
<feature type="binding site" evidence="1">
    <location>
        <position position="169"/>
    </location>
    <ligand>
        <name>L-aspartate</name>
        <dbReference type="ChEBI" id="CHEBI:29991"/>
    </ligand>
</feature>
<feature type="binding site" evidence="1">
    <location>
        <begin position="215"/>
        <end position="217"/>
    </location>
    <ligand>
        <name>ATP</name>
        <dbReference type="ChEBI" id="CHEBI:30616"/>
    </ligand>
</feature>
<feature type="binding site" evidence="1">
    <location>
        <position position="215"/>
    </location>
    <ligand>
        <name>L-aspartate</name>
        <dbReference type="ChEBI" id="CHEBI:29991"/>
    </ligand>
</feature>
<feature type="binding site" evidence="1">
    <location>
        <position position="224"/>
    </location>
    <ligand>
        <name>ATP</name>
        <dbReference type="ChEBI" id="CHEBI:30616"/>
    </ligand>
</feature>
<feature type="binding site" evidence="1">
    <location>
        <position position="447"/>
    </location>
    <ligand>
        <name>L-aspartate</name>
        <dbReference type="ChEBI" id="CHEBI:29991"/>
    </ligand>
</feature>
<feature type="binding site" evidence="1">
    <location>
        <position position="481"/>
    </location>
    <ligand>
        <name>ATP</name>
        <dbReference type="ChEBI" id="CHEBI:30616"/>
    </ligand>
</feature>
<feature type="binding site" evidence="1">
    <location>
        <position position="488"/>
    </location>
    <ligand>
        <name>L-aspartate</name>
        <dbReference type="ChEBI" id="CHEBI:29991"/>
    </ligand>
</feature>
<feature type="binding site" evidence="1">
    <location>
        <begin position="533"/>
        <end position="536"/>
    </location>
    <ligand>
        <name>ATP</name>
        <dbReference type="ChEBI" id="CHEBI:30616"/>
    </ligand>
</feature>
<feature type="site" description="Important for tRNA non-discrimination" evidence="1">
    <location>
        <position position="31"/>
    </location>
</feature>
<feature type="site" description="Important for tRNA non-discrimination" evidence="1">
    <location>
        <position position="77"/>
    </location>
</feature>
<keyword id="KW-0030">Aminoacyl-tRNA synthetase</keyword>
<keyword id="KW-0067">ATP-binding</keyword>
<keyword id="KW-0963">Cytoplasm</keyword>
<keyword id="KW-0436">Ligase</keyword>
<keyword id="KW-0547">Nucleotide-binding</keyword>
<keyword id="KW-0648">Protein biosynthesis</keyword>
<name>SYDND_PSECP</name>
<organism>
    <name type="scientific">Pseudarthrobacter chlorophenolicus (strain ATCC 700700 / DSM 12829 / CIP 107037 / JCM 12360 / KCTC 9906 / NCIMB 13794 / A6)</name>
    <name type="common">Arthrobacter chlorophenolicus</name>
    <dbReference type="NCBI Taxonomy" id="452863"/>
    <lineage>
        <taxon>Bacteria</taxon>
        <taxon>Bacillati</taxon>
        <taxon>Actinomycetota</taxon>
        <taxon>Actinomycetes</taxon>
        <taxon>Micrococcales</taxon>
        <taxon>Micrococcaceae</taxon>
        <taxon>Pseudarthrobacter</taxon>
    </lineage>
</organism>
<protein>
    <recommendedName>
        <fullName evidence="1">Aspartate--tRNA(Asp/Asn) ligase</fullName>
        <ecNumber evidence="1">6.1.1.23</ecNumber>
    </recommendedName>
    <alternativeName>
        <fullName evidence="1">Aspartyl-tRNA synthetase</fullName>
        <shortName evidence="1">AspRS</shortName>
    </alternativeName>
    <alternativeName>
        <fullName evidence="1">Non-discriminating aspartyl-tRNA synthetase</fullName>
        <shortName evidence="1">ND-AspRS</shortName>
    </alternativeName>
</protein>